<feature type="chain" id="PRO_0000303731" description="Exodeoxyribonuclease 7 small subunit">
    <location>
        <begin position="1"/>
        <end position="78"/>
    </location>
</feature>
<gene>
    <name evidence="1" type="primary">xseB</name>
    <name type="ordered locus">PEPE_0819</name>
</gene>
<evidence type="ECO:0000255" key="1">
    <source>
        <dbReference type="HAMAP-Rule" id="MF_00337"/>
    </source>
</evidence>
<proteinExistence type="inferred from homology"/>
<organism>
    <name type="scientific">Pediococcus pentosaceus (strain ATCC 25745 / CCUG 21536 / LMG 10740 / 183-1w)</name>
    <dbReference type="NCBI Taxonomy" id="278197"/>
    <lineage>
        <taxon>Bacteria</taxon>
        <taxon>Bacillati</taxon>
        <taxon>Bacillota</taxon>
        <taxon>Bacilli</taxon>
        <taxon>Lactobacillales</taxon>
        <taxon>Lactobacillaceae</taxon>
        <taxon>Pediococcus</taxon>
    </lineage>
</organism>
<comment type="function">
    <text evidence="1">Bidirectionally degrades single-stranded DNA into large acid-insoluble oligonucleotides, which are then degraded further into small acid-soluble oligonucleotides.</text>
</comment>
<comment type="catalytic activity">
    <reaction evidence="1">
        <text>Exonucleolytic cleavage in either 5'- to 3'- or 3'- to 5'-direction to yield nucleoside 5'-phosphates.</text>
        <dbReference type="EC" id="3.1.11.6"/>
    </reaction>
</comment>
<comment type="subunit">
    <text evidence="1">Heterooligomer composed of large and small subunits.</text>
</comment>
<comment type="subcellular location">
    <subcellularLocation>
        <location evidence="1">Cytoplasm</location>
    </subcellularLocation>
</comment>
<comment type="similarity">
    <text evidence="1">Belongs to the XseB family.</text>
</comment>
<dbReference type="EC" id="3.1.11.6" evidence="1"/>
<dbReference type="EMBL" id="CP000422">
    <property type="protein sequence ID" value="ABJ67879.1"/>
    <property type="molecule type" value="Genomic_DNA"/>
</dbReference>
<dbReference type="RefSeq" id="WP_002833547.1">
    <property type="nucleotide sequence ID" value="NC_008525.1"/>
</dbReference>
<dbReference type="SMR" id="Q03FZ3"/>
<dbReference type="STRING" id="278197.PEPE_0819"/>
<dbReference type="GeneID" id="33061927"/>
<dbReference type="KEGG" id="ppe:PEPE_0819"/>
<dbReference type="eggNOG" id="COG1722">
    <property type="taxonomic scope" value="Bacteria"/>
</dbReference>
<dbReference type="HOGENOM" id="CLU_145918_3_2_9"/>
<dbReference type="OrthoDB" id="9798666at2"/>
<dbReference type="Proteomes" id="UP000000773">
    <property type="component" value="Chromosome"/>
</dbReference>
<dbReference type="GO" id="GO:0005829">
    <property type="term" value="C:cytosol"/>
    <property type="evidence" value="ECO:0007669"/>
    <property type="project" value="TreeGrafter"/>
</dbReference>
<dbReference type="GO" id="GO:0009318">
    <property type="term" value="C:exodeoxyribonuclease VII complex"/>
    <property type="evidence" value="ECO:0007669"/>
    <property type="project" value="InterPro"/>
</dbReference>
<dbReference type="GO" id="GO:0008855">
    <property type="term" value="F:exodeoxyribonuclease VII activity"/>
    <property type="evidence" value="ECO:0007669"/>
    <property type="project" value="UniProtKB-UniRule"/>
</dbReference>
<dbReference type="GO" id="GO:0006308">
    <property type="term" value="P:DNA catabolic process"/>
    <property type="evidence" value="ECO:0007669"/>
    <property type="project" value="UniProtKB-UniRule"/>
</dbReference>
<dbReference type="Gene3D" id="1.10.287.1040">
    <property type="entry name" value="Exonuclease VII, small subunit"/>
    <property type="match status" value="1"/>
</dbReference>
<dbReference type="HAMAP" id="MF_00337">
    <property type="entry name" value="Exonuc_7_S"/>
    <property type="match status" value="1"/>
</dbReference>
<dbReference type="InterPro" id="IPR003761">
    <property type="entry name" value="Exonuc_VII_S"/>
</dbReference>
<dbReference type="InterPro" id="IPR037004">
    <property type="entry name" value="Exonuc_VII_ssu_sf"/>
</dbReference>
<dbReference type="NCBIfam" id="NF002138">
    <property type="entry name" value="PRK00977.1-2"/>
    <property type="match status" value="1"/>
</dbReference>
<dbReference type="NCBIfam" id="TIGR01280">
    <property type="entry name" value="xseB"/>
    <property type="match status" value="1"/>
</dbReference>
<dbReference type="PANTHER" id="PTHR34137">
    <property type="entry name" value="EXODEOXYRIBONUCLEASE 7 SMALL SUBUNIT"/>
    <property type="match status" value="1"/>
</dbReference>
<dbReference type="PANTHER" id="PTHR34137:SF1">
    <property type="entry name" value="EXODEOXYRIBONUCLEASE 7 SMALL SUBUNIT"/>
    <property type="match status" value="1"/>
</dbReference>
<dbReference type="Pfam" id="PF02609">
    <property type="entry name" value="Exonuc_VII_S"/>
    <property type="match status" value="1"/>
</dbReference>
<dbReference type="PIRSF" id="PIRSF006488">
    <property type="entry name" value="Exonuc_VII_S"/>
    <property type="match status" value="1"/>
</dbReference>
<dbReference type="SUPFAM" id="SSF116842">
    <property type="entry name" value="XseB-like"/>
    <property type="match status" value="1"/>
</dbReference>
<sequence>MAEEKTFEENLQELQQVVSNLEQGDIPLEKALTEFQKGIQLSSELQETLKNAEKTLTKVMQDNGEETNLDLGTDGENE</sequence>
<name>EX7S_PEDPA</name>
<accession>Q03FZ3</accession>
<protein>
    <recommendedName>
        <fullName evidence="1">Exodeoxyribonuclease 7 small subunit</fullName>
        <ecNumber evidence="1">3.1.11.6</ecNumber>
    </recommendedName>
    <alternativeName>
        <fullName evidence="1">Exodeoxyribonuclease VII small subunit</fullName>
        <shortName evidence="1">Exonuclease VII small subunit</shortName>
    </alternativeName>
</protein>
<keyword id="KW-0963">Cytoplasm</keyword>
<keyword id="KW-0269">Exonuclease</keyword>
<keyword id="KW-0378">Hydrolase</keyword>
<keyword id="KW-0540">Nuclease</keyword>
<reference key="1">
    <citation type="journal article" date="2006" name="Proc. Natl. Acad. Sci. U.S.A.">
        <title>Comparative genomics of the lactic acid bacteria.</title>
        <authorList>
            <person name="Makarova K.S."/>
            <person name="Slesarev A."/>
            <person name="Wolf Y.I."/>
            <person name="Sorokin A."/>
            <person name="Mirkin B."/>
            <person name="Koonin E.V."/>
            <person name="Pavlov A."/>
            <person name="Pavlova N."/>
            <person name="Karamychev V."/>
            <person name="Polouchine N."/>
            <person name="Shakhova V."/>
            <person name="Grigoriev I."/>
            <person name="Lou Y."/>
            <person name="Rohksar D."/>
            <person name="Lucas S."/>
            <person name="Huang K."/>
            <person name="Goodstein D.M."/>
            <person name="Hawkins T."/>
            <person name="Plengvidhya V."/>
            <person name="Welker D."/>
            <person name="Hughes J."/>
            <person name="Goh Y."/>
            <person name="Benson A."/>
            <person name="Baldwin K."/>
            <person name="Lee J.-H."/>
            <person name="Diaz-Muniz I."/>
            <person name="Dosti B."/>
            <person name="Smeianov V."/>
            <person name="Wechter W."/>
            <person name="Barabote R."/>
            <person name="Lorca G."/>
            <person name="Altermann E."/>
            <person name="Barrangou R."/>
            <person name="Ganesan B."/>
            <person name="Xie Y."/>
            <person name="Rawsthorne H."/>
            <person name="Tamir D."/>
            <person name="Parker C."/>
            <person name="Breidt F."/>
            <person name="Broadbent J.R."/>
            <person name="Hutkins R."/>
            <person name="O'Sullivan D."/>
            <person name="Steele J."/>
            <person name="Unlu G."/>
            <person name="Saier M.H. Jr."/>
            <person name="Klaenhammer T."/>
            <person name="Richardson P."/>
            <person name="Kozyavkin S."/>
            <person name="Weimer B.C."/>
            <person name="Mills D.A."/>
        </authorList>
    </citation>
    <scope>NUCLEOTIDE SEQUENCE [LARGE SCALE GENOMIC DNA]</scope>
    <source>
        <strain>ATCC 25745 / CCUG 21536 / LMG 10740 / 183-1w</strain>
    </source>
</reference>